<feature type="chain" id="PRO_0000167781" description="Pyridoxine/pyridoxamine 5'-phosphate oxidase">
    <location>
        <begin position="1"/>
        <end position="192"/>
    </location>
</feature>
<feature type="binding site" evidence="1">
    <location>
        <begin position="41"/>
        <end position="46"/>
    </location>
    <ligand>
        <name>FMN</name>
        <dbReference type="ChEBI" id="CHEBI:58210"/>
    </ligand>
</feature>
<feature type="binding site" evidence="1">
    <location>
        <position position="46"/>
    </location>
    <ligand>
        <name>substrate</name>
    </ligand>
</feature>
<feature type="binding site" evidence="1">
    <location>
        <begin position="56"/>
        <end position="57"/>
    </location>
    <ligand>
        <name>FMN</name>
        <dbReference type="ChEBI" id="CHEBI:58210"/>
    </ligand>
</feature>
<feature type="binding site" evidence="1">
    <location>
        <position position="62"/>
    </location>
    <ligand>
        <name>FMN</name>
        <dbReference type="ChEBI" id="CHEBI:58210"/>
    </ligand>
</feature>
<feature type="binding site" evidence="1">
    <location>
        <position position="63"/>
    </location>
    <ligand>
        <name>FMN</name>
        <dbReference type="ChEBI" id="CHEBI:58210"/>
    </ligand>
</feature>
<feature type="binding site" evidence="1">
    <location>
        <position position="85"/>
    </location>
    <ligand>
        <name>FMN</name>
        <dbReference type="ChEBI" id="CHEBI:58210"/>
    </ligand>
</feature>
<feature type="binding site" evidence="1">
    <location>
        <position position="103"/>
    </location>
    <ligand>
        <name>substrate</name>
    </ligand>
</feature>
<feature type="binding site" evidence="1">
    <location>
        <position position="107"/>
    </location>
    <ligand>
        <name>substrate</name>
    </ligand>
</feature>
<feature type="binding site" evidence="1">
    <location>
        <position position="111"/>
    </location>
    <ligand>
        <name>substrate</name>
    </ligand>
</feature>
<feature type="binding site" evidence="1">
    <location>
        <begin position="120"/>
        <end position="121"/>
    </location>
    <ligand>
        <name>FMN</name>
        <dbReference type="ChEBI" id="CHEBI:58210"/>
    </ligand>
</feature>
<feature type="binding site" evidence="1">
    <location>
        <position position="165"/>
    </location>
    <ligand>
        <name>FMN</name>
        <dbReference type="ChEBI" id="CHEBI:58210"/>
    </ligand>
</feature>
<feature type="binding site" evidence="1">
    <location>
        <begin position="171"/>
        <end position="173"/>
    </location>
    <ligand>
        <name>substrate</name>
    </ligand>
</feature>
<feature type="binding site" evidence="1">
    <location>
        <position position="175"/>
    </location>
    <ligand>
        <name>FMN</name>
        <dbReference type="ChEBI" id="CHEBI:58210"/>
    </ligand>
</feature>
<proteinExistence type="inferred from homology"/>
<evidence type="ECO:0000255" key="1">
    <source>
        <dbReference type="HAMAP-Rule" id="MF_01629"/>
    </source>
</evidence>
<gene>
    <name evidence="1" type="primary">pdxH</name>
    <name type="ordered locus">ZMO0851</name>
</gene>
<reference key="1">
    <citation type="submission" date="1999-08" db="EMBL/GenBank/DDBJ databases">
        <title>Sequence analysis of 41E10 fosmid clone of Zymomonas mobilis.</title>
        <authorList>
            <person name="Um H.W."/>
            <person name="Kang H.S."/>
        </authorList>
    </citation>
    <scope>NUCLEOTIDE SEQUENCE [GENOMIC DNA]</scope>
    <source>
        <strain>ATCC 31821 / ZM4 / CP4</strain>
    </source>
</reference>
<reference key="2">
    <citation type="journal article" date="2005" name="Nat. Biotechnol.">
        <title>The genome sequence of the ethanologenic bacterium Zymomonas mobilis ZM4.</title>
        <authorList>
            <person name="Seo J.-S."/>
            <person name="Chong H."/>
            <person name="Park H.S."/>
            <person name="Yoon K.-O."/>
            <person name="Jung C."/>
            <person name="Kim J.J."/>
            <person name="Hong J.H."/>
            <person name="Kim H."/>
            <person name="Kim J.-H."/>
            <person name="Kil J.-I."/>
            <person name="Park C.J."/>
            <person name="Oh H.-M."/>
            <person name="Lee J.-S."/>
            <person name="Jin S.-J."/>
            <person name="Um H.-W."/>
            <person name="Lee H.-J."/>
            <person name="Oh S.-J."/>
            <person name="Kim J.Y."/>
            <person name="Kang H.L."/>
            <person name="Lee S.Y."/>
            <person name="Lee K.J."/>
            <person name="Kang H.S."/>
        </authorList>
    </citation>
    <scope>NUCLEOTIDE SEQUENCE [LARGE SCALE GENOMIC DNA]</scope>
    <source>
        <strain>ATCC 31821 / ZM4 / CP4</strain>
    </source>
</reference>
<protein>
    <recommendedName>
        <fullName evidence="1">Pyridoxine/pyridoxamine 5'-phosphate oxidase</fullName>
        <ecNumber evidence="1">1.4.3.5</ecNumber>
    </recommendedName>
    <alternativeName>
        <fullName evidence="1">PNP/PMP oxidase</fullName>
        <shortName evidence="1">PNPOx</shortName>
    </alternativeName>
    <alternativeName>
        <fullName evidence="1">Pyridoxal 5'-phosphate synthase</fullName>
    </alternativeName>
</protein>
<keyword id="KW-0285">Flavoprotein</keyword>
<keyword id="KW-0288">FMN</keyword>
<keyword id="KW-0560">Oxidoreductase</keyword>
<keyword id="KW-0664">Pyridoxine biosynthesis</keyword>
<keyword id="KW-1185">Reference proteome</keyword>
<sequence>MTQDPHKMFDEWMDEAKKAETDDPTAMALATASKQAFPCVRMMLLKGHTKDGFVFFTNLGSRKGHELLENPVATLLFHWKKLRRQVRIEGAATLISDEEADAYFATRARKSQLGAWASEQSRPLPARDVFEKRIADIEARYEGKDVPRPPYWTGFRVSPIRMEFWNDREFRLHERELFTLNDGRWQSEFLYP</sequence>
<name>PDXH_ZYMMO</name>
<comment type="function">
    <text evidence="1">Catalyzes the oxidation of either pyridoxine 5'-phosphate (PNP) or pyridoxamine 5'-phosphate (PMP) into pyridoxal 5'-phosphate (PLP).</text>
</comment>
<comment type="catalytic activity">
    <reaction evidence="1">
        <text>pyridoxamine 5'-phosphate + O2 + H2O = pyridoxal 5'-phosphate + H2O2 + NH4(+)</text>
        <dbReference type="Rhea" id="RHEA:15817"/>
        <dbReference type="ChEBI" id="CHEBI:15377"/>
        <dbReference type="ChEBI" id="CHEBI:15379"/>
        <dbReference type="ChEBI" id="CHEBI:16240"/>
        <dbReference type="ChEBI" id="CHEBI:28938"/>
        <dbReference type="ChEBI" id="CHEBI:58451"/>
        <dbReference type="ChEBI" id="CHEBI:597326"/>
        <dbReference type="EC" id="1.4.3.5"/>
    </reaction>
</comment>
<comment type="catalytic activity">
    <reaction evidence="1">
        <text>pyridoxine 5'-phosphate + O2 = pyridoxal 5'-phosphate + H2O2</text>
        <dbReference type="Rhea" id="RHEA:15149"/>
        <dbReference type="ChEBI" id="CHEBI:15379"/>
        <dbReference type="ChEBI" id="CHEBI:16240"/>
        <dbReference type="ChEBI" id="CHEBI:58589"/>
        <dbReference type="ChEBI" id="CHEBI:597326"/>
        <dbReference type="EC" id="1.4.3.5"/>
    </reaction>
</comment>
<comment type="cofactor">
    <cofactor evidence="1">
        <name>FMN</name>
        <dbReference type="ChEBI" id="CHEBI:58210"/>
    </cofactor>
    <text evidence="1">Binds 1 FMN per subunit.</text>
</comment>
<comment type="pathway">
    <text evidence="1">Cofactor metabolism; pyridoxal 5'-phosphate salvage; pyridoxal 5'-phosphate from pyridoxamine 5'-phosphate: step 1/1.</text>
</comment>
<comment type="pathway">
    <text evidence="1">Cofactor metabolism; pyridoxal 5'-phosphate salvage; pyridoxal 5'-phosphate from pyridoxine 5'-phosphate: step 1/1.</text>
</comment>
<comment type="subunit">
    <text evidence="1">Homodimer.</text>
</comment>
<comment type="similarity">
    <text evidence="1">Belongs to the pyridoxamine 5'-phosphate oxidase family.</text>
</comment>
<organism>
    <name type="scientific">Zymomonas mobilis subsp. mobilis (strain ATCC 31821 / ZM4 / CP4)</name>
    <dbReference type="NCBI Taxonomy" id="264203"/>
    <lineage>
        <taxon>Bacteria</taxon>
        <taxon>Pseudomonadati</taxon>
        <taxon>Pseudomonadota</taxon>
        <taxon>Alphaproteobacteria</taxon>
        <taxon>Sphingomonadales</taxon>
        <taxon>Zymomonadaceae</taxon>
        <taxon>Zymomonas</taxon>
    </lineage>
</organism>
<accession>Q9RNP3</accession>
<accession>Q5NP85</accession>
<dbReference type="EC" id="1.4.3.5" evidence="1"/>
<dbReference type="EMBL" id="AF179611">
    <property type="protein sequence ID" value="AAD53919.1"/>
    <property type="molecule type" value="Genomic_DNA"/>
</dbReference>
<dbReference type="EMBL" id="AE008692">
    <property type="protein sequence ID" value="AAV89475.1"/>
    <property type="molecule type" value="Genomic_DNA"/>
</dbReference>
<dbReference type="RefSeq" id="WP_011240718.1">
    <property type="nucleotide sequence ID" value="NZ_CP035711.1"/>
</dbReference>
<dbReference type="SMR" id="Q9RNP3"/>
<dbReference type="STRING" id="264203.ZMO0851"/>
<dbReference type="GeneID" id="79903993"/>
<dbReference type="KEGG" id="zmo:ZMO0851"/>
<dbReference type="eggNOG" id="COG0259">
    <property type="taxonomic scope" value="Bacteria"/>
</dbReference>
<dbReference type="HOGENOM" id="CLU_032263_2_2_5"/>
<dbReference type="UniPathway" id="UPA01068">
    <property type="reaction ID" value="UER00304"/>
</dbReference>
<dbReference type="UniPathway" id="UPA01068">
    <property type="reaction ID" value="UER00305"/>
</dbReference>
<dbReference type="Proteomes" id="UP000001173">
    <property type="component" value="Chromosome"/>
</dbReference>
<dbReference type="GO" id="GO:0010181">
    <property type="term" value="F:FMN binding"/>
    <property type="evidence" value="ECO:0007669"/>
    <property type="project" value="UniProtKB-UniRule"/>
</dbReference>
<dbReference type="GO" id="GO:0004733">
    <property type="term" value="F:pyridoxamine phosphate oxidase activity"/>
    <property type="evidence" value="ECO:0007669"/>
    <property type="project" value="UniProtKB-UniRule"/>
</dbReference>
<dbReference type="GO" id="GO:0008615">
    <property type="term" value="P:pyridoxine biosynthetic process"/>
    <property type="evidence" value="ECO:0007669"/>
    <property type="project" value="UniProtKB-KW"/>
</dbReference>
<dbReference type="Gene3D" id="2.30.110.10">
    <property type="entry name" value="Electron Transport, Fmn-binding Protein, Chain A"/>
    <property type="match status" value="1"/>
</dbReference>
<dbReference type="HAMAP" id="MF_01629">
    <property type="entry name" value="PdxH"/>
    <property type="match status" value="1"/>
</dbReference>
<dbReference type="InterPro" id="IPR000659">
    <property type="entry name" value="Pyridox_Oxase"/>
</dbReference>
<dbReference type="InterPro" id="IPR019740">
    <property type="entry name" value="Pyridox_Oxase_CS"/>
</dbReference>
<dbReference type="InterPro" id="IPR011576">
    <property type="entry name" value="Pyridox_Oxase_N"/>
</dbReference>
<dbReference type="InterPro" id="IPR019576">
    <property type="entry name" value="Pyridoxamine_oxidase_dimer_C"/>
</dbReference>
<dbReference type="InterPro" id="IPR012349">
    <property type="entry name" value="Split_barrel_FMN-bd"/>
</dbReference>
<dbReference type="NCBIfam" id="TIGR00558">
    <property type="entry name" value="pdxH"/>
    <property type="match status" value="1"/>
</dbReference>
<dbReference type="NCBIfam" id="NF004231">
    <property type="entry name" value="PRK05679.1"/>
    <property type="match status" value="1"/>
</dbReference>
<dbReference type="PANTHER" id="PTHR10851:SF0">
    <property type="entry name" value="PYRIDOXINE-5'-PHOSPHATE OXIDASE"/>
    <property type="match status" value="1"/>
</dbReference>
<dbReference type="PANTHER" id="PTHR10851">
    <property type="entry name" value="PYRIDOXINE-5-PHOSPHATE OXIDASE"/>
    <property type="match status" value="1"/>
</dbReference>
<dbReference type="Pfam" id="PF10590">
    <property type="entry name" value="PNP_phzG_C"/>
    <property type="match status" value="1"/>
</dbReference>
<dbReference type="Pfam" id="PF01243">
    <property type="entry name" value="PNPOx_N"/>
    <property type="match status" value="1"/>
</dbReference>
<dbReference type="PIRSF" id="PIRSF000190">
    <property type="entry name" value="Pyd_amn-ph_oxd"/>
    <property type="match status" value="1"/>
</dbReference>
<dbReference type="SUPFAM" id="SSF50475">
    <property type="entry name" value="FMN-binding split barrel"/>
    <property type="match status" value="1"/>
</dbReference>
<dbReference type="PROSITE" id="PS01064">
    <property type="entry name" value="PYRIDOX_OXIDASE"/>
    <property type="match status" value="1"/>
</dbReference>